<name>Y1069_ALLAM</name>
<sequence length="201" mass="21516">MAFSTLKSDRERGFLDGHFLIAMPGMADGNFTRSVVYVCAHTTAGAMGFIINRTQPVKFADILLHLDLIDQNDAIMLPDHARNFPIQCGGPVETGRGFVLHSDDYLSDSSIPVSDDISLTATLDIVRAISDGRGPARATMLLGYAGWGPGQLEAEIANNGWLNCPASEDLIFDPVLDNKYDRALALIGISPATLSAEAGHA</sequence>
<organism>
    <name type="scientific">Allorhizobium ampelinum (strain ATCC BAA-846 / DSM 112012 / S4)</name>
    <name type="common">Agrobacterium vitis (strain S4)</name>
    <dbReference type="NCBI Taxonomy" id="311402"/>
    <lineage>
        <taxon>Bacteria</taxon>
        <taxon>Pseudomonadati</taxon>
        <taxon>Pseudomonadota</taxon>
        <taxon>Alphaproteobacteria</taxon>
        <taxon>Hyphomicrobiales</taxon>
        <taxon>Rhizobiaceae</taxon>
        <taxon>Rhizobium/Agrobacterium group</taxon>
        <taxon>Allorhizobium</taxon>
        <taxon>Allorhizobium ampelinum</taxon>
    </lineage>
</organism>
<gene>
    <name type="ordered locus">Avi_1069</name>
</gene>
<evidence type="ECO:0000255" key="1">
    <source>
        <dbReference type="HAMAP-Rule" id="MF_00758"/>
    </source>
</evidence>
<keyword id="KW-1185">Reference proteome</keyword>
<reference key="1">
    <citation type="journal article" date="2009" name="J. Bacteriol.">
        <title>Genome sequences of three Agrobacterium biovars help elucidate the evolution of multichromosome genomes in bacteria.</title>
        <authorList>
            <person name="Slater S.C."/>
            <person name="Goldman B.S."/>
            <person name="Goodner B."/>
            <person name="Setubal J.C."/>
            <person name="Farrand S.K."/>
            <person name="Nester E.W."/>
            <person name="Burr T.J."/>
            <person name="Banta L."/>
            <person name="Dickerman A.W."/>
            <person name="Paulsen I."/>
            <person name="Otten L."/>
            <person name="Suen G."/>
            <person name="Welch R."/>
            <person name="Almeida N.F."/>
            <person name="Arnold F."/>
            <person name="Burton O.T."/>
            <person name="Du Z."/>
            <person name="Ewing A."/>
            <person name="Godsy E."/>
            <person name="Heisel S."/>
            <person name="Houmiel K.L."/>
            <person name="Jhaveri J."/>
            <person name="Lu J."/>
            <person name="Miller N.M."/>
            <person name="Norton S."/>
            <person name="Chen Q."/>
            <person name="Phoolcharoen W."/>
            <person name="Ohlin V."/>
            <person name="Ondrusek D."/>
            <person name="Pride N."/>
            <person name="Stricklin S.L."/>
            <person name="Sun J."/>
            <person name="Wheeler C."/>
            <person name="Wilson L."/>
            <person name="Zhu H."/>
            <person name="Wood D.W."/>
        </authorList>
    </citation>
    <scope>NUCLEOTIDE SEQUENCE [LARGE SCALE GENOMIC DNA]</scope>
    <source>
        <strain>ATCC BAA-846 / DSM 112012 / S4</strain>
    </source>
</reference>
<proteinExistence type="inferred from homology"/>
<feature type="chain" id="PRO_1000148375" description="UPF0301 protein Avi_1069">
    <location>
        <begin position="1"/>
        <end position="201"/>
    </location>
</feature>
<protein>
    <recommendedName>
        <fullName evidence="1">UPF0301 protein Avi_1069</fullName>
    </recommendedName>
</protein>
<accession>B9JT47</accession>
<comment type="similarity">
    <text evidence="1">Belongs to the UPF0301 (AlgH) family.</text>
</comment>
<dbReference type="EMBL" id="CP000633">
    <property type="protein sequence ID" value="ACM35760.1"/>
    <property type="molecule type" value="Genomic_DNA"/>
</dbReference>
<dbReference type="RefSeq" id="WP_015915184.1">
    <property type="nucleotide sequence ID" value="NC_011989.1"/>
</dbReference>
<dbReference type="SMR" id="B9JT47"/>
<dbReference type="STRING" id="311402.Avi_1069"/>
<dbReference type="KEGG" id="avi:Avi_1069"/>
<dbReference type="eggNOG" id="COG1678">
    <property type="taxonomic scope" value="Bacteria"/>
</dbReference>
<dbReference type="HOGENOM" id="CLU_057596_1_0_5"/>
<dbReference type="Proteomes" id="UP000001596">
    <property type="component" value="Chromosome 1"/>
</dbReference>
<dbReference type="GO" id="GO:0005829">
    <property type="term" value="C:cytosol"/>
    <property type="evidence" value="ECO:0007669"/>
    <property type="project" value="TreeGrafter"/>
</dbReference>
<dbReference type="Gene3D" id="3.40.1740.10">
    <property type="entry name" value="VC0467-like"/>
    <property type="match status" value="1"/>
</dbReference>
<dbReference type="HAMAP" id="MF_00758">
    <property type="entry name" value="UPF0301"/>
    <property type="match status" value="1"/>
</dbReference>
<dbReference type="InterPro" id="IPR003774">
    <property type="entry name" value="AlgH-like"/>
</dbReference>
<dbReference type="NCBIfam" id="NF001268">
    <property type="entry name" value="PRK00228.1-4"/>
    <property type="match status" value="1"/>
</dbReference>
<dbReference type="PANTHER" id="PTHR30327">
    <property type="entry name" value="UNCHARACTERIZED PROTEIN YQGE"/>
    <property type="match status" value="1"/>
</dbReference>
<dbReference type="PANTHER" id="PTHR30327:SF1">
    <property type="entry name" value="UPF0301 PROTEIN YQGE"/>
    <property type="match status" value="1"/>
</dbReference>
<dbReference type="Pfam" id="PF02622">
    <property type="entry name" value="DUF179"/>
    <property type="match status" value="1"/>
</dbReference>
<dbReference type="SUPFAM" id="SSF143456">
    <property type="entry name" value="VC0467-like"/>
    <property type="match status" value="1"/>
</dbReference>